<sequence length="355" mass="39561">MSLCTLAINLSAIKNNYFLLQDICKTSLVGAVVKADGYGLGAVQISKALIEENCRHFFVASSEEGVNVRKALGIDVNILVLNGVFEHDALELIEYNLIPILNNLKQIEIWQQFGNLKNLLLPCYLHFNTGINRLGLSSNEIEQLINNRDLLKGLNLQYIISHLAISEEIDNPYNLEQLNKFKAYLRYFPSIKASLANSGGIFLGQDYHFDLVRPGAALYGLNPLMQNPVTLKAPIIHLQNLTLDSHIGYNMTFTTKRDSVIATLPLGYADGYSRNFSNQGKVFINGRSVPIVGRVSMDLINIDVTDLPPSDIFLGQEVEIIGNHCTPDKIASIIGTIGYEVLTSLGNRYRRKYTR</sequence>
<proteinExistence type="inferred from homology"/>
<evidence type="ECO:0000255" key="1">
    <source>
        <dbReference type="HAMAP-Rule" id="MF_01201"/>
    </source>
</evidence>
<comment type="function">
    <text evidence="1">Catalyzes the interconversion of L-alanine and D-alanine. May also act on other amino acids.</text>
</comment>
<comment type="catalytic activity">
    <reaction evidence="1">
        <text>L-alanine = D-alanine</text>
        <dbReference type="Rhea" id="RHEA:20249"/>
        <dbReference type="ChEBI" id="CHEBI:57416"/>
        <dbReference type="ChEBI" id="CHEBI:57972"/>
        <dbReference type="EC" id="5.1.1.1"/>
    </reaction>
</comment>
<comment type="cofactor">
    <cofactor evidence="1">
        <name>pyridoxal 5'-phosphate</name>
        <dbReference type="ChEBI" id="CHEBI:597326"/>
    </cofactor>
</comment>
<comment type="pathway">
    <text evidence="1">Amino-acid biosynthesis; D-alanine biosynthesis; D-alanine from L-alanine: step 1/1.</text>
</comment>
<comment type="similarity">
    <text evidence="1">Belongs to the alanine racemase family.</text>
</comment>
<keyword id="KW-0413">Isomerase</keyword>
<keyword id="KW-0663">Pyridoxal phosphate</keyword>
<protein>
    <recommendedName>
        <fullName evidence="1">Alanine racemase</fullName>
        <ecNumber evidence="1">5.1.1.1</ecNumber>
    </recommendedName>
</protein>
<feature type="chain" id="PRO_1000066035" description="Alanine racemase">
    <location>
        <begin position="1"/>
        <end position="355"/>
    </location>
</feature>
<feature type="active site" description="Proton acceptor; specific for D-alanine" evidence="1">
    <location>
        <position position="34"/>
    </location>
</feature>
<feature type="active site" description="Proton acceptor; specific for L-alanine" evidence="1">
    <location>
        <position position="249"/>
    </location>
</feature>
<feature type="binding site" evidence="1">
    <location>
        <position position="133"/>
    </location>
    <ligand>
        <name>substrate</name>
    </ligand>
</feature>
<feature type="binding site" evidence="1">
    <location>
        <position position="297"/>
    </location>
    <ligand>
        <name>substrate</name>
    </ligand>
</feature>
<feature type="modified residue" description="N6-(pyridoxal phosphate)lysine" evidence="1">
    <location>
        <position position="34"/>
    </location>
</feature>
<name>ALR_RICCK</name>
<organism>
    <name type="scientific">Rickettsia canadensis (strain McKiel)</name>
    <dbReference type="NCBI Taxonomy" id="293613"/>
    <lineage>
        <taxon>Bacteria</taxon>
        <taxon>Pseudomonadati</taxon>
        <taxon>Pseudomonadota</taxon>
        <taxon>Alphaproteobacteria</taxon>
        <taxon>Rickettsiales</taxon>
        <taxon>Rickettsiaceae</taxon>
        <taxon>Rickettsieae</taxon>
        <taxon>Rickettsia</taxon>
        <taxon>belli group</taxon>
    </lineage>
</organism>
<accession>A8EXF8</accession>
<dbReference type="EC" id="5.1.1.1" evidence="1"/>
<dbReference type="EMBL" id="CP000409">
    <property type="protein sequence ID" value="ABV73041.1"/>
    <property type="molecule type" value="Genomic_DNA"/>
</dbReference>
<dbReference type="RefSeq" id="WP_012148242.1">
    <property type="nucleotide sequence ID" value="NC_009879.1"/>
</dbReference>
<dbReference type="SMR" id="A8EXF8"/>
<dbReference type="STRING" id="293613.A1E_00455"/>
<dbReference type="KEGG" id="rcm:A1E_00455"/>
<dbReference type="eggNOG" id="COG0787">
    <property type="taxonomic scope" value="Bacteria"/>
</dbReference>
<dbReference type="HOGENOM" id="CLU_028393_1_1_5"/>
<dbReference type="UniPathway" id="UPA00042">
    <property type="reaction ID" value="UER00497"/>
</dbReference>
<dbReference type="Proteomes" id="UP000007056">
    <property type="component" value="Chromosome"/>
</dbReference>
<dbReference type="GO" id="GO:0005829">
    <property type="term" value="C:cytosol"/>
    <property type="evidence" value="ECO:0007669"/>
    <property type="project" value="TreeGrafter"/>
</dbReference>
<dbReference type="GO" id="GO:0008784">
    <property type="term" value="F:alanine racemase activity"/>
    <property type="evidence" value="ECO:0007669"/>
    <property type="project" value="UniProtKB-UniRule"/>
</dbReference>
<dbReference type="GO" id="GO:0030170">
    <property type="term" value="F:pyridoxal phosphate binding"/>
    <property type="evidence" value="ECO:0007669"/>
    <property type="project" value="UniProtKB-UniRule"/>
</dbReference>
<dbReference type="GO" id="GO:0030632">
    <property type="term" value="P:D-alanine biosynthetic process"/>
    <property type="evidence" value="ECO:0007669"/>
    <property type="project" value="UniProtKB-UniRule"/>
</dbReference>
<dbReference type="CDD" id="cd00430">
    <property type="entry name" value="PLPDE_III_AR"/>
    <property type="match status" value="1"/>
</dbReference>
<dbReference type="Gene3D" id="3.20.20.10">
    <property type="entry name" value="Alanine racemase"/>
    <property type="match status" value="1"/>
</dbReference>
<dbReference type="Gene3D" id="2.40.37.10">
    <property type="entry name" value="Lyase, Ornithine Decarboxylase, Chain A, domain 1"/>
    <property type="match status" value="1"/>
</dbReference>
<dbReference type="HAMAP" id="MF_01201">
    <property type="entry name" value="Ala_racemase"/>
    <property type="match status" value="1"/>
</dbReference>
<dbReference type="InterPro" id="IPR000821">
    <property type="entry name" value="Ala_racemase"/>
</dbReference>
<dbReference type="InterPro" id="IPR009006">
    <property type="entry name" value="Ala_racemase/Decarboxylase_C"/>
</dbReference>
<dbReference type="InterPro" id="IPR011079">
    <property type="entry name" value="Ala_racemase_C"/>
</dbReference>
<dbReference type="InterPro" id="IPR001608">
    <property type="entry name" value="Ala_racemase_N"/>
</dbReference>
<dbReference type="InterPro" id="IPR020622">
    <property type="entry name" value="Ala_racemase_pyridoxalP-BS"/>
</dbReference>
<dbReference type="InterPro" id="IPR029066">
    <property type="entry name" value="PLP-binding_barrel"/>
</dbReference>
<dbReference type="NCBIfam" id="TIGR00492">
    <property type="entry name" value="alr"/>
    <property type="match status" value="1"/>
</dbReference>
<dbReference type="NCBIfam" id="NF000792">
    <property type="entry name" value="PRK00053.2-3"/>
    <property type="match status" value="1"/>
</dbReference>
<dbReference type="PANTHER" id="PTHR30511">
    <property type="entry name" value="ALANINE RACEMASE"/>
    <property type="match status" value="1"/>
</dbReference>
<dbReference type="PANTHER" id="PTHR30511:SF0">
    <property type="entry name" value="ALANINE RACEMASE, CATABOLIC-RELATED"/>
    <property type="match status" value="1"/>
</dbReference>
<dbReference type="Pfam" id="PF00842">
    <property type="entry name" value="Ala_racemase_C"/>
    <property type="match status" value="1"/>
</dbReference>
<dbReference type="Pfam" id="PF01168">
    <property type="entry name" value="Ala_racemase_N"/>
    <property type="match status" value="1"/>
</dbReference>
<dbReference type="PRINTS" id="PR00992">
    <property type="entry name" value="ALARACEMASE"/>
</dbReference>
<dbReference type="SMART" id="SM01005">
    <property type="entry name" value="Ala_racemase_C"/>
    <property type="match status" value="1"/>
</dbReference>
<dbReference type="SUPFAM" id="SSF50621">
    <property type="entry name" value="Alanine racemase C-terminal domain-like"/>
    <property type="match status" value="1"/>
</dbReference>
<dbReference type="SUPFAM" id="SSF51419">
    <property type="entry name" value="PLP-binding barrel"/>
    <property type="match status" value="1"/>
</dbReference>
<dbReference type="PROSITE" id="PS00395">
    <property type="entry name" value="ALANINE_RACEMASE"/>
    <property type="match status" value="1"/>
</dbReference>
<reference key="1">
    <citation type="submission" date="2007-09" db="EMBL/GenBank/DDBJ databases">
        <title>Complete genome sequence of Rickettsia canadensis.</title>
        <authorList>
            <person name="Madan A."/>
            <person name="Fahey J."/>
            <person name="Helton E."/>
            <person name="Ketteman M."/>
            <person name="Madan A."/>
            <person name="Rodrigues S."/>
            <person name="Sanchez A."/>
            <person name="Whiting M."/>
            <person name="Dasch G."/>
            <person name="Eremeeva M."/>
        </authorList>
    </citation>
    <scope>NUCLEOTIDE SEQUENCE [LARGE SCALE GENOMIC DNA]</scope>
    <source>
        <strain>McKiel</strain>
    </source>
</reference>
<gene>
    <name type="primary">alr</name>
    <name type="ordered locus">A1E_00455</name>
</gene>